<protein>
    <recommendedName>
        <fullName>Armadillo segment polarity protein</fullName>
    </recommendedName>
</protein>
<comment type="function">
    <text evidence="1">May associate with CadN and participate in the transmission of developmental information. Can associate with alpha-catenin. Accumulates through wg signaling; arm function in wg signal transduction is required early in development for determination of neuroblast fate. Arm and Abl proteins function cooperatively at adherens junctions in both the CNS and epidermis (By similarity).</text>
</comment>
<comment type="subunit">
    <text evidence="1">Interacts with Mer and Moe at the adherens junction.</text>
</comment>
<comment type="subcellular location">
    <subcellularLocation>
        <location evidence="1">Cytoplasm</location>
    </subcellularLocation>
    <subcellularLocation>
        <location evidence="1">Cell membrane</location>
        <topology evidence="1">Peripheral membrane protein</topology>
        <orientation evidence="1">Cytoplasmic side</orientation>
    </subcellularLocation>
    <subcellularLocation>
        <location evidence="1">Cell junction</location>
        <location evidence="1">Adherens junction</location>
    </subcellularLocation>
    <text evidence="1">Inner surface of cell membrane and adherens junction.</text>
</comment>
<comment type="PTM">
    <text evidence="1">Phosphorylated on Ser, Thr and Tyr residues. Level of phosphorylation varies both during embryonic development and from embryonic tissue to tissue. Sgg is required for phosphorylation and wg signal negatively regulates arm phosphorylation. Hypophosphorylated form of arm increases in steady-state levels (By similarity).</text>
</comment>
<comment type="disruption phenotype">
    <text evidence="3">Development of anterior structures in the posterior part of the segment.</text>
</comment>
<comment type="similarity">
    <text evidence="4">Belongs to the beta-catenin family.</text>
</comment>
<keyword id="KW-0130">Cell adhesion</keyword>
<keyword id="KW-0965">Cell junction</keyword>
<keyword id="KW-1003">Cell membrane</keyword>
<keyword id="KW-0963">Cytoplasm</keyword>
<keyword id="KW-0217">Developmental protein</keyword>
<keyword id="KW-0472">Membrane</keyword>
<keyword id="KW-0597">Phosphoprotein</keyword>
<keyword id="KW-1185">Reference proteome</keyword>
<keyword id="KW-0677">Repeat</keyword>
<keyword id="KW-0709">Segmentation polarity protein</keyword>
<keyword id="KW-0879">Wnt signaling pathway</keyword>
<dbReference type="EMBL" id="L04874">
    <property type="protein sequence ID" value="AAA29292.1"/>
    <property type="molecule type" value="mRNA"/>
</dbReference>
<dbReference type="RefSeq" id="NP_001273824.1">
    <property type="nucleotide sequence ID" value="NM_001286895.1"/>
</dbReference>
<dbReference type="SMR" id="Q02453"/>
<dbReference type="STRING" id="7370.Q02453"/>
<dbReference type="EnsemblMetazoa" id="MDOA012332-RC">
    <property type="protein sequence ID" value="MDOA012332-PC"/>
    <property type="gene ID" value="MDOA012332"/>
</dbReference>
<dbReference type="GeneID" id="101899911"/>
<dbReference type="KEGG" id="mde:101899911"/>
<dbReference type="CTD" id="101899911"/>
<dbReference type="VEuPathDB" id="VectorBase:MDOA012332"/>
<dbReference type="VEuPathDB" id="VectorBase:MDOMA2_003283"/>
<dbReference type="eggNOG" id="KOG4203">
    <property type="taxonomic scope" value="Eukaryota"/>
</dbReference>
<dbReference type="OrthoDB" id="195736at2759"/>
<dbReference type="Proteomes" id="UP000694905">
    <property type="component" value="Unplaced"/>
</dbReference>
<dbReference type="GO" id="GO:0005912">
    <property type="term" value="C:adherens junction"/>
    <property type="evidence" value="ECO:0007669"/>
    <property type="project" value="UniProtKB-SubCell"/>
</dbReference>
<dbReference type="GO" id="GO:0005737">
    <property type="term" value="C:cytoplasm"/>
    <property type="evidence" value="ECO:0007669"/>
    <property type="project" value="UniProtKB-SubCell"/>
</dbReference>
<dbReference type="GO" id="GO:0005886">
    <property type="term" value="C:plasma membrane"/>
    <property type="evidence" value="ECO:0007669"/>
    <property type="project" value="UniProtKB-SubCell"/>
</dbReference>
<dbReference type="GO" id="GO:0045296">
    <property type="term" value="F:cadherin binding"/>
    <property type="evidence" value="ECO:0007669"/>
    <property type="project" value="InterPro"/>
</dbReference>
<dbReference type="GO" id="GO:0007155">
    <property type="term" value="P:cell adhesion"/>
    <property type="evidence" value="ECO:0007669"/>
    <property type="project" value="UniProtKB-KW"/>
</dbReference>
<dbReference type="GO" id="GO:0007367">
    <property type="term" value="P:segment polarity determination"/>
    <property type="evidence" value="ECO:0007669"/>
    <property type="project" value="UniProtKB-KW"/>
</dbReference>
<dbReference type="GO" id="GO:0016055">
    <property type="term" value="P:Wnt signaling pathway"/>
    <property type="evidence" value="ECO:0007669"/>
    <property type="project" value="UniProtKB-KW"/>
</dbReference>
<dbReference type="CDD" id="cd21726">
    <property type="entry name" value="CTNNAbd_dArm"/>
    <property type="match status" value="1"/>
</dbReference>
<dbReference type="FunFam" id="1.25.10.10:FF:000015">
    <property type="entry name" value="Catenin beta-1"/>
    <property type="match status" value="1"/>
</dbReference>
<dbReference type="Gene3D" id="1.25.10.10">
    <property type="entry name" value="Leucine-rich Repeat Variant"/>
    <property type="match status" value="1"/>
</dbReference>
<dbReference type="InterPro" id="IPR011989">
    <property type="entry name" value="ARM-like"/>
</dbReference>
<dbReference type="InterPro" id="IPR016024">
    <property type="entry name" value="ARM-type_fold"/>
</dbReference>
<dbReference type="InterPro" id="IPR000225">
    <property type="entry name" value="Armadillo"/>
</dbReference>
<dbReference type="InterPro" id="IPR013284">
    <property type="entry name" value="Beta-catenin"/>
</dbReference>
<dbReference type="PANTHER" id="PTHR45976">
    <property type="entry name" value="ARMADILLO SEGMENT POLARITY PROTEIN"/>
    <property type="match status" value="1"/>
</dbReference>
<dbReference type="Pfam" id="PF00514">
    <property type="entry name" value="Arm"/>
    <property type="match status" value="4"/>
</dbReference>
<dbReference type="PRINTS" id="PR01869">
    <property type="entry name" value="BCATNINFAMLY"/>
</dbReference>
<dbReference type="SMART" id="SM00185">
    <property type="entry name" value="ARM"/>
    <property type="match status" value="12"/>
</dbReference>
<dbReference type="SUPFAM" id="SSF48371">
    <property type="entry name" value="ARM repeat"/>
    <property type="match status" value="1"/>
</dbReference>
<dbReference type="PROSITE" id="PS50176">
    <property type="entry name" value="ARM_REPEAT"/>
    <property type="match status" value="9"/>
</dbReference>
<sequence length="813" mass="88237">MSHNNQYNPPDLPPMVSAKEQTLMWQQNSYLVDSGIHSGAVTQAPSLSGKEDEEMEGDPLMFDLDTGFPQNFTQDQVDDMNQQLSQTRSQRVRAAMFPETLEEGIEIPSTQFDPQQPTAVQRLAEPSQMLKHAVVNLINYQDDAELATRAIPELIKLLNDEDQVVVSQAAMMVHQLSKKEASRHAITNSPQMVAALVRAISNSNDLESTKAAVGTLHNLSHHRQGLLAIFKSGGIPALVKLLSSPVESVLFYAITTLHNLLLHQDGSKMAVRLAGGLQKMVTLLQRNNVKFLAIVTDCLQILAYGNQESKLIILASGGPNELVRIMRSYDYEKLLWTTSRVLKVLSVCSSNKPAIVDAGGMQALAMHLSNPSPRLVQNCLWTLRNLSDAATKVDGLEPLLQSLVQVLASTDVNVVTCAAGILSNLTCNNQRNKATVCQVGGVDALVRTIINAGDREEITEPAVCALRHLTTRHADSEMAQNAVRLNYGLSVIVKLLHPPSRWPLIKAAIGLVRNLALCPANAAPLREHGAIHHLVRLLMRAFQDTERQRSSVATTGSQQPAAYADGVRMEEIVEGTVGALHILARESHNRALIRQQSVIPIFVRLLFNEIENIQRVAAGVLCELAADKEGAEIIEQEGATGPLTDLLHSRNEGVATYAAAVLFRMSEDKPQDYKKRLSIELTTNSLLREDNNIWGNADLGLGPDLQDMLGPEQAYEGLYGQGPPSVHSSHGGRAFQQGYDTLPIDSMQGLEISSPVGGGGGGGAPPSAAPTSPYSMDMDVGEIDAGALNFDLDAMPTPPNDNNNLAAWYDTDC</sequence>
<evidence type="ECO:0000250" key="1"/>
<evidence type="ECO:0000256" key="2">
    <source>
        <dbReference type="SAM" id="MobiDB-lite"/>
    </source>
</evidence>
<evidence type="ECO:0000269" key="3">
    <source>
    </source>
</evidence>
<evidence type="ECO:0000305" key="4"/>
<reference key="1">
    <citation type="journal article" date="1993" name="J. Mol. Evol.">
        <title>The product of the Drosophila melanogaster segment polarity gene armadillo is highly conserved in sequence and expression in the housefly Musca domestica.</title>
        <authorList>
            <person name="Peifer M.A."/>
            <person name="Wieschaus E."/>
        </authorList>
    </citation>
    <scope>NUCLEOTIDE SEQUENCE [MRNA]</scope>
    <scope>DISRUPTION PHENOTYPE</scope>
</reference>
<gene>
    <name type="primary">arm</name>
</gene>
<organism>
    <name type="scientific">Musca domestica</name>
    <name type="common">House fly</name>
    <dbReference type="NCBI Taxonomy" id="7370"/>
    <lineage>
        <taxon>Eukaryota</taxon>
        <taxon>Metazoa</taxon>
        <taxon>Ecdysozoa</taxon>
        <taxon>Arthropoda</taxon>
        <taxon>Hexapoda</taxon>
        <taxon>Insecta</taxon>
        <taxon>Pterygota</taxon>
        <taxon>Neoptera</taxon>
        <taxon>Endopterygota</taxon>
        <taxon>Diptera</taxon>
        <taxon>Brachycera</taxon>
        <taxon>Muscomorpha</taxon>
        <taxon>Muscoidea</taxon>
        <taxon>Muscidae</taxon>
        <taxon>Musca</taxon>
    </lineage>
</organism>
<feature type="chain" id="PRO_0000064293" description="Armadillo segment polarity protein">
    <location>
        <begin position="1"/>
        <end position="813"/>
    </location>
</feature>
<feature type="repeat" description="ARM 1">
    <location>
        <begin position="139"/>
        <end position="178"/>
    </location>
</feature>
<feature type="repeat" description="ARM 2">
    <location>
        <begin position="180"/>
        <end position="221"/>
    </location>
</feature>
<feature type="repeat" description="ARM 3">
    <location>
        <begin position="223"/>
        <end position="262"/>
    </location>
</feature>
<feature type="repeat" description="ARM 4">
    <location>
        <begin position="265"/>
        <end position="304"/>
    </location>
</feature>
<feature type="repeat" description="ARM 5">
    <location>
        <begin position="349"/>
        <end position="387"/>
    </location>
</feature>
<feature type="repeat" description="ARM 6">
    <location>
        <begin position="388"/>
        <end position="427"/>
    </location>
</feature>
<feature type="repeat" description="ARM 7">
    <location>
        <begin position="430"/>
        <end position="471"/>
    </location>
</feature>
<feature type="repeat" description="ARM 8">
    <location>
        <begin position="477"/>
        <end position="517"/>
    </location>
</feature>
<feature type="repeat" description="ARM 9">
    <location>
        <begin position="587"/>
        <end position="626"/>
    </location>
</feature>
<feature type="repeat" description="ARM 10">
    <location>
        <begin position="628"/>
        <end position="667"/>
    </location>
</feature>
<feature type="region of interest" description="Disordered" evidence="2">
    <location>
        <begin position="714"/>
        <end position="779"/>
    </location>
</feature>
<feature type="compositionally biased region" description="Low complexity" evidence="2">
    <location>
        <begin position="765"/>
        <end position="775"/>
    </location>
</feature>
<accession>Q02453</accession>
<name>ARM_MUSDO</name>
<proteinExistence type="evidence at transcript level"/>